<proteinExistence type="inferred from homology"/>
<name>Y1224_RICAE</name>
<keyword id="KW-0963">Cytoplasm</keyword>
<keyword id="KW-0238">DNA-binding</keyword>
<organism>
    <name type="scientific">Rickettsia africae (strain ESF-5)</name>
    <dbReference type="NCBI Taxonomy" id="347255"/>
    <lineage>
        <taxon>Bacteria</taxon>
        <taxon>Pseudomonadati</taxon>
        <taxon>Pseudomonadota</taxon>
        <taxon>Alphaproteobacteria</taxon>
        <taxon>Rickettsiales</taxon>
        <taxon>Rickettsiaceae</taxon>
        <taxon>Rickettsieae</taxon>
        <taxon>Rickettsia</taxon>
        <taxon>spotted fever group</taxon>
    </lineage>
</organism>
<feature type="chain" id="PRO_1000204779" description="Nucleoid-associated protein RAF_ORF1224">
    <location>
        <begin position="1"/>
        <end position="107"/>
    </location>
</feature>
<sequence>MVNFNQFLKQAQSMQKKMQEAQEQMANARYTGKAGGGLVEVIATGKGEVEKISIDESLLKAEEKEMLEDLIKVAFNDAQQKCDEDSQNSLSGALNGMRLPPGFKMPF</sequence>
<accession>C3PM02</accession>
<dbReference type="EMBL" id="CP001612">
    <property type="protein sequence ID" value="ACP53992.1"/>
    <property type="molecule type" value="Genomic_DNA"/>
</dbReference>
<dbReference type="RefSeq" id="WP_010977891.1">
    <property type="nucleotide sequence ID" value="NC_012633.1"/>
</dbReference>
<dbReference type="SMR" id="C3PM02"/>
<dbReference type="KEGG" id="raf:RAF_ORF1224"/>
<dbReference type="HOGENOM" id="CLU_140930_0_0_5"/>
<dbReference type="Proteomes" id="UP000002305">
    <property type="component" value="Chromosome"/>
</dbReference>
<dbReference type="GO" id="GO:0043590">
    <property type="term" value="C:bacterial nucleoid"/>
    <property type="evidence" value="ECO:0007669"/>
    <property type="project" value="UniProtKB-UniRule"/>
</dbReference>
<dbReference type="GO" id="GO:0005829">
    <property type="term" value="C:cytosol"/>
    <property type="evidence" value="ECO:0007669"/>
    <property type="project" value="TreeGrafter"/>
</dbReference>
<dbReference type="GO" id="GO:0003677">
    <property type="term" value="F:DNA binding"/>
    <property type="evidence" value="ECO:0007669"/>
    <property type="project" value="UniProtKB-UniRule"/>
</dbReference>
<dbReference type="Gene3D" id="3.30.1310.10">
    <property type="entry name" value="Nucleoid-associated protein YbaB-like domain"/>
    <property type="match status" value="1"/>
</dbReference>
<dbReference type="HAMAP" id="MF_00274">
    <property type="entry name" value="DNA_YbaB_EbfC"/>
    <property type="match status" value="1"/>
</dbReference>
<dbReference type="InterPro" id="IPR036894">
    <property type="entry name" value="YbaB-like_sf"/>
</dbReference>
<dbReference type="InterPro" id="IPR004401">
    <property type="entry name" value="YbaB/EbfC"/>
</dbReference>
<dbReference type="NCBIfam" id="TIGR00103">
    <property type="entry name" value="DNA_YbaB_EbfC"/>
    <property type="match status" value="1"/>
</dbReference>
<dbReference type="PANTHER" id="PTHR33449">
    <property type="entry name" value="NUCLEOID-ASSOCIATED PROTEIN YBAB"/>
    <property type="match status" value="1"/>
</dbReference>
<dbReference type="PANTHER" id="PTHR33449:SF1">
    <property type="entry name" value="NUCLEOID-ASSOCIATED PROTEIN YBAB"/>
    <property type="match status" value="1"/>
</dbReference>
<dbReference type="Pfam" id="PF02575">
    <property type="entry name" value="YbaB_DNA_bd"/>
    <property type="match status" value="1"/>
</dbReference>
<dbReference type="PIRSF" id="PIRSF004555">
    <property type="entry name" value="UCP004555"/>
    <property type="match status" value="1"/>
</dbReference>
<dbReference type="SUPFAM" id="SSF82607">
    <property type="entry name" value="YbaB-like"/>
    <property type="match status" value="1"/>
</dbReference>
<gene>
    <name type="ordered locus">RAF_ORF1224</name>
</gene>
<evidence type="ECO:0000255" key="1">
    <source>
        <dbReference type="HAMAP-Rule" id="MF_00274"/>
    </source>
</evidence>
<reference key="1">
    <citation type="journal article" date="2009" name="BMC Genomics">
        <title>Analysis of the Rickettsia africae genome reveals that virulence acquisition in Rickettsia species may be explained by genome reduction.</title>
        <authorList>
            <person name="Fournier P.-E."/>
            <person name="El Karkouri K."/>
            <person name="Leroy Q."/>
            <person name="Robert C."/>
            <person name="Giumelli B."/>
            <person name="Renesto P."/>
            <person name="Socolovschi C."/>
            <person name="Parola P."/>
            <person name="Audic S."/>
            <person name="Raoult D."/>
        </authorList>
    </citation>
    <scope>NUCLEOTIDE SEQUENCE [LARGE SCALE GENOMIC DNA]</scope>
    <source>
        <strain>ESF-5</strain>
    </source>
</reference>
<protein>
    <recommendedName>
        <fullName evidence="1">Nucleoid-associated protein RAF_ORF1224</fullName>
    </recommendedName>
</protein>
<comment type="function">
    <text evidence="1">Binds to DNA and alters its conformation. May be involved in regulation of gene expression, nucleoid organization and DNA protection.</text>
</comment>
<comment type="subunit">
    <text evidence="1">Homodimer.</text>
</comment>
<comment type="subcellular location">
    <subcellularLocation>
        <location evidence="1">Cytoplasm</location>
        <location evidence="1">Nucleoid</location>
    </subcellularLocation>
</comment>
<comment type="similarity">
    <text evidence="1">Belongs to the YbaB/EbfC family.</text>
</comment>